<evidence type="ECO:0000250" key="1"/>
<evidence type="ECO:0000255" key="2">
    <source>
        <dbReference type="HAMAP-Rule" id="MF_00138"/>
    </source>
</evidence>
<dbReference type="EC" id="6.3.4.13" evidence="2"/>
<dbReference type="EMBL" id="AE003852">
    <property type="protein sequence ID" value="AAF93450.1"/>
    <property type="molecule type" value="Genomic_DNA"/>
</dbReference>
<dbReference type="PIR" id="B82344">
    <property type="entry name" value="B82344"/>
</dbReference>
<dbReference type="RefSeq" id="NP_229931.1">
    <property type="nucleotide sequence ID" value="NC_002505.1"/>
</dbReference>
<dbReference type="RefSeq" id="WP_001197681.1">
    <property type="nucleotide sequence ID" value="NZ_LT906614.1"/>
</dbReference>
<dbReference type="SMR" id="Q9KV81"/>
<dbReference type="STRING" id="243277.VC_0275"/>
<dbReference type="DNASU" id="2614998"/>
<dbReference type="EnsemblBacteria" id="AAF93450">
    <property type="protein sequence ID" value="AAF93450"/>
    <property type="gene ID" value="VC_0275"/>
</dbReference>
<dbReference type="KEGG" id="vch:VC_0275"/>
<dbReference type="PATRIC" id="fig|243277.26.peg.255"/>
<dbReference type="eggNOG" id="COG0151">
    <property type="taxonomic scope" value="Bacteria"/>
</dbReference>
<dbReference type="HOGENOM" id="CLU_027420_3_1_6"/>
<dbReference type="UniPathway" id="UPA00074">
    <property type="reaction ID" value="UER00125"/>
</dbReference>
<dbReference type="Proteomes" id="UP000000584">
    <property type="component" value="Chromosome 1"/>
</dbReference>
<dbReference type="GO" id="GO:0005524">
    <property type="term" value="F:ATP binding"/>
    <property type="evidence" value="ECO:0007669"/>
    <property type="project" value="UniProtKB-KW"/>
</dbReference>
<dbReference type="GO" id="GO:0046872">
    <property type="term" value="F:metal ion binding"/>
    <property type="evidence" value="ECO:0007669"/>
    <property type="project" value="UniProtKB-KW"/>
</dbReference>
<dbReference type="GO" id="GO:0004637">
    <property type="term" value="F:phosphoribosylamine-glycine ligase activity"/>
    <property type="evidence" value="ECO:0007669"/>
    <property type="project" value="UniProtKB-UniRule"/>
</dbReference>
<dbReference type="GO" id="GO:0006189">
    <property type="term" value="P:'de novo' IMP biosynthetic process"/>
    <property type="evidence" value="ECO:0007669"/>
    <property type="project" value="UniProtKB-UniRule"/>
</dbReference>
<dbReference type="GO" id="GO:0009113">
    <property type="term" value="P:purine nucleobase biosynthetic process"/>
    <property type="evidence" value="ECO:0007669"/>
    <property type="project" value="InterPro"/>
</dbReference>
<dbReference type="FunFam" id="3.30.470.20:FF:000031">
    <property type="entry name" value="Phosphoribosylamine--glycine ligase"/>
    <property type="match status" value="1"/>
</dbReference>
<dbReference type="FunFam" id="3.40.50.20:FF:000006">
    <property type="entry name" value="Phosphoribosylamine--glycine ligase, chloroplastic"/>
    <property type="match status" value="1"/>
</dbReference>
<dbReference type="FunFam" id="3.30.1490.20:FF:000006">
    <property type="entry name" value="phosphoribosylamine--glycine ligase, chloroplastic-like"/>
    <property type="match status" value="1"/>
</dbReference>
<dbReference type="FunFam" id="3.90.600.10:FF:000001">
    <property type="entry name" value="Trifunctional purine biosynthetic protein adenosine-3"/>
    <property type="match status" value="1"/>
</dbReference>
<dbReference type="Gene3D" id="3.40.50.20">
    <property type="match status" value="1"/>
</dbReference>
<dbReference type="Gene3D" id="3.30.1490.20">
    <property type="entry name" value="ATP-grasp fold, A domain"/>
    <property type="match status" value="1"/>
</dbReference>
<dbReference type="Gene3D" id="3.30.470.20">
    <property type="entry name" value="ATP-grasp fold, B domain"/>
    <property type="match status" value="1"/>
</dbReference>
<dbReference type="Gene3D" id="3.90.600.10">
    <property type="entry name" value="Phosphoribosylglycinamide synthetase, C-terminal domain"/>
    <property type="match status" value="1"/>
</dbReference>
<dbReference type="HAMAP" id="MF_00138">
    <property type="entry name" value="GARS"/>
    <property type="match status" value="1"/>
</dbReference>
<dbReference type="InterPro" id="IPR011761">
    <property type="entry name" value="ATP-grasp"/>
</dbReference>
<dbReference type="InterPro" id="IPR013815">
    <property type="entry name" value="ATP_grasp_subdomain_1"/>
</dbReference>
<dbReference type="InterPro" id="IPR016185">
    <property type="entry name" value="PreATP-grasp_dom_sf"/>
</dbReference>
<dbReference type="InterPro" id="IPR020561">
    <property type="entry name" value="PRibGlycinamid_synth_ATP-grasp"/>
</dbReference>
<dbReference type="InterPro" id="IPR000115">
    <property type="entry name" value="PRibGlycinamide_synth"/>
</dbReference>
<dbReference type="InterPro" id="IPR020560">
    <property type="entry name" value="PRibGlycinamide_synth_C-dom"/>
</dbReference>
<dbReference type="InterPro" id="IPR037123">
    <property type="entry name" value="PRibGlycinamide_synth_C_sf"/>
</dbReference>
<dbReference type="InterPro" id="IPR020559">
    <property type="entry name" value="PRibGlycinamide_synth_CS"/>
</dbReference>
<dbReference type="InterPro" id="IPR020562">
    <property type="entry name" value="PRibGlycinamide_synth_N"/>
</dbReference>
<dbReference type="InterPro" id="IPR011054">
    <property type="entry name" value="Rudment_hybrid_motif"/>
</dbReference>
<dbReference type="NCBIfam" id="TIGR00877">
    <property type="entry name" value="purD"/>
    <property type="match status" value="1"/>
</dbReference>
<dbReference type="PANTHER" id="PTHR43472">
    <property type="entry name" value="PHOSPHORIBOSYLAMINE--GLYCINE LIGASE"/>
    <property type="match status" value="1"/>
</dbReference>
<dbReference type="PANTHER" id="PTHR43472:SF1">
    <property type="entry name" value="PHOSPHORIBOSYLAMINE--GLYCINE LIGASE, CHLOROPLASTIC"/>
    <property type="match status" value="1"/>
</dbReference>
<dbReference type="Pfam" id="PF01071">
    <property type="entry name" value="GARS_A"/>
    <property type="match status" value="1"/>
</dbReference>
<dbReference type="Pfam" id="PF02843">
    <property type="entry name" value="GARS_C"/>
    <property type="match status" value="1"/>
</dbReference>
<dbReference type="Pfam" id="PF02844">
    <property type="entry name" value="GARS_N"/>
    <property type="match status" value="1"/>
</dbReference>
<dbReference type="SMART" id="SM01209">
    <property type="entry name" value="GARS_A"/>
    <property type="match status" value="1"/>
</dbReference>
<dbReference type="SMART" id="SM01210">
    <property type="entry name" value="GARS_C"/>
    <property type="match status" value="1"/>
</dbReference>
<dbReference type="SUPFAM" id="SSF56059">
    <property type="entry name" value="Glutathione synthetase ATP-binding domain-like"/>
    <property type="match status" value="1"/>
</dbReference>
<dbReference type="SUPFAM" id="SSF52440">
    <property type="entry name" value="PreATP-grasp domain"/>
    <property type="match status" value="1"/>
</dbReference>
<dbReference type="SUPFAM" id="SSF51246">
    <property type="entry name" value="Rudiment single hybrid motif"/>
    <property type="match status" value="1"/>
</dbReference>
<dbReference type="PROSITE" id="PS50975">
    <property type="entry name" value="ATP_GRASP"/>
    <property type="match status" value="1"/>
</dbReference>
<dbReference type="PROSITE" id="PS00184">
    <property type="entry name" value="GARS"/>
    <property type="match status" value="1"/>
</dbReference>
<comment type="catalytic activity">
    <reaction evidence="2">
        <text>5-phospho-beta-D-ribosylamine + glycine + ATP = N(1)-(5-phospho-beta-D-ribosyl)glycinamide + ADP + phosphate + H(+)</text>
        <dbReference type="Rhea" id="RHEA:17453"/>
        <dbReference type="ChEBI" id="CHEBI:15378"/>
        <dbReference type="ChEBI" id="CHEBI:30616"/>
        <dbReference type="ChEBI" id="CHEBI:43474"/>
        <dbReference type="ChEBI" id="CHEBI:57305"/>
        <dbReference type="ChEBI" id="CHEBI:58681"/>
        <dbReference type="ChEBI" id="CHEBI:143788"/>
        <dbReference type="ChEBI" id="CHEBI:456216"/>
        <dbReference type="EC" id="6.3.4.13"/>
    </reaction>
</comment>
<comment type="cofactor">
    <cofactor evidence="1">
        <name>Mg(2+)</name>
        <dbReference type="ChEBI" id="CHEBI:18420"/>
    </cofactor>
    <cofactor evidence="1">
        <name>Mn(2+)</name>
        <dbReference type="ChEBI" id="CHEBI:29035"/>
    </cofactor>
    <text evidence="1">Binds 1 Mg(2+) or Mn(2+) ion per subunit.</text>
</comment>
<comment type="pathway">
    <text evidence="2">Purine metabolism; IMP biosynthesis via de novo pathway; N(1)-(5-phospho-D-ribosyl)glycinamide from 5-phospho-alpha-D-ribose 1-diphosphate: step 2/2.</text>
</comment>
<comment type="similarity">
    <text evidence="2">Belongs to the GARS family.</text>
</comment>
<gene>
    <name evidence="2" type="primary">purD</name>
    <name type="ordered locus">VC_0275</name>
</gene>
<feature type="chain" id="PRO_0000151497" description="Phosphoribosylamine--glycine ligase">
    <location>
        <begin position="1"/>
        <end position="429"/>
    </location>
</feature>
<feature type="domain" description="ATP-grasp" evidence="2">
    <location>
        <begin position="109"/>
        <end position="316"/>
    </location>
</feature>
<feature type="binding site" evidence="2">
    <location>
        <begin position="135"/>
        <end position="196"/>
    </location>
    <ligand>
        <name>ATP</name>
        <dbReference type="ChEBI" id="CHEBI:30616"/>
    </ligand>
</feature>
<feature type="binding site" evidence="2">
    <location>
        <position position="286"/>
    </location>
    <ligand>
        <name>Mg(2+)</name>
        <dbReference type="ChEBI" id="CHEBI:18420"/>
    </ligand>
</feature>
<feature type="binding site" evidence="2">
    <location>
        <position position="288"/>
    </location>
    <ligand>
        <name>Mg(2+)</name>
        <dbReference type="ChEBI" id="CHEBI:18420"/>
    </ligand>
</feature>
<proteinExistence type="inferred from homology"/>
<keyword id="KW-0067">ATP-binding</keyword>
<keyword id="KW-0436">Ligase</keyword>
<keyword id="KW-0460">Magnesium</keyword>
<keyword id="KW-0464">Manganese</keyword>
<keyword id="KW-0479">Metal-binding</keyword>
<keyword id="KW-0547">Nucleotide-binding</keyword>
<keyword id="KW-0658">Purine biosynthesis</keyword>
<keyword id="KW-1185">Reference proteome</keyword>
<name>PUR2_VIBCH</name>
<organism>
    <name type="scientific">Vibrio cholerae serotype O1 (strain ATCC 39315 / El Tor Inaba N16961)</name>
    <dbReference type="NCBI Taxonomy" id="243277"/>
    <lineage>
        <taxon>Bacteria</taxon>
        <taxon>Pseudomonadati</taxon>
        <taxon>Pseudomonadota</taxon>
        <taxon>Gammaproteobacteria</taxon>
        <taxon>Vibrionales</taxon>
        <taxon>Vibrionaceae</taxon>
        <taxon>Vibrio</taxon>
    </lineage>
</organism>
<accession>Q9KV81</accession>
<protein>
    <recommendedName>
        <fullName evidence="2">Phosphoribosylamine--glycine ligase</fullName>
        <ecNumber evidence="2">6.3.4.13</ecNumber>
    </recommendedName>
    <alternativeName>
        <fullName evidence="2">GARS</fullName>
    </alternativeName>
    <alternativeName>
        <fullName evidence="2">Glycinamide ribonucleotide synthetase</fullName>
    </alternativeName>
    <alternativeName>
        <fullName evidence="2">Phosphoribosylglycinamide synthetase</fullName>
    </alternativeName>
</protein>
<reference key="1">
    <citation type="journal article" date="2000" name="Nature">
        <title>DNA sequence of both chromosomes of the cholera pathogen Vibrio cholerae.</title>
        <authorList>
            <person name="Heidelberg J.F."/>
            <person name="Eisen J.A."/>
            <person name="Nelson W.C."/>
            <person name="Clayton R.A."/>
            <person name="Gwinn M.L."/>
            <person name="Dodson R.J."/>
            <person name="Haft D.H."/>
            <person name="Hickey E.K."/>
            <person name="Peterson J.D."/>
            <person name="Umayam L.A."/>
            <person name="Gill S.R."/>
            <person name="Nelson K.E."/>
            <person name="Read T.D."/>
            <person name="Tettelin H."/>
            <person name="Richardson D.L."/>
            <person name="Ermolaeva M.D."/>
            <person name="Vamathevan J.J."/>
            <person name="Bass S."/>
            <person name="Qin H."/>
            <person name="Dragoi I."/>
            <person name="Sellers P."/>
            <person name="McDonald L.A."/>
            <person name="Utterback T.R."/>
            <person name="Fleischmann R.D."/>
            <person name="Nierman W.C."/>
            <person name="White O."/>
            <person name="Salzberg S.L."/>
            <person name="Smith H.O."/>
            <person name="Colwell R.R."/>
            <person name="Mekalanos J.J."/>
            <person name="Venter J.C."/>
            <person name="Fraser C.M."/>
        </authorList>
    </citation>
    <scope>NUCLEOTIDE SEQUENCE [LARGE SCALE GENOMIC DNA]</scope>
    <source>
        <strain>ATCC 39315 / El Tor Inaba N16961</strain>
    </source>
</reference>
<sequence>MQVLIIGSGGREHALAWKVAQNPQVDTIYVAPGNAGTALEHKVQNVNIGITDIPALVAFAQDKAIELTIVGPEAPLVIGVVDAFRAAGLPIFGPTQGAAQLEGSKAFTKDFLARHNIPTAAYANFTEIEPALAYVREKGAPIVVKADGLAAGKGVIVAMTLQEAEDAIQDMLAGNAFGSAGSRVVVEEFLDGEEASFIVMVDGENVLPMATSQDHKRVGDADTGPNTGGMGAYSPAPVVTQDVHDRVMREVIDPTVRGMAAEGNTYTGFLYAGLMIDSTGAPKVIEYNCRFGDPETQPIMMRLQSDLVELCQAAIAGKLDQVESKWDPRASIGVVLAAGGYPGDYAKGEVISGLPTQESAGQKVFHAGTETQGDQVVTNGGRVLCATALGNTVLEAQQRAYQLADQIHWNGMFCRRDIGYRAIAREQAK</sequence>